<gene>
    <name evidence="1" type="primary">glpE</name>
    <name type="ordered locus">ECSE_3691</name>
</gene>
<evidence type="ECO:0000255" key="1">
    <source>
        <dbReference type="HAMAP-Rule" id="MF_01009"/>
    </source>
</evidence>
<protein>
    <recommendedName>
        <fullName evidence="1">Thiosulfate sulfurtransferase GlpE</fullName>
        <ecNumber evidence="1">2.8.1.1</ecNumber>
    </recommendedName>
</protein>
<proteinExistence type="inferred from homology"/>
<accession>B6I2Y8</accession>
<sequence>MDQFECINVADAHQKLQEKEAVLVDIRDPQSFAMGHAVQAFHLTNDTLGAFMRDNDFDTPVMVMCYHGNSSKGAAQYLLQQGYDVVYSIDGGFEAWQRQFPAEVAYGA</sequence>
<dbReference type="EC" id="2.8.1.1" evidence="1"/>
<dbReference type="EMBL" id="AP009240">
    <property type="protein sequence ID" value="BAG79215.1"/>
    <property type="molecule type" value="Genomic_DNA"/>
</dbReference>
<dbReference type="RefSeq" id="WP_000371928.1">
    <property type="nucleotide sequence ID" value="NC_011415.1"/>
</dbReference>
<dbReference type="SMR" id="B6I2Y8"/>
<dbReference type="GeneID" id="93778571"/>
<dbReference type="KEGG" id="ecy:ECSE_3691"/>
<dbReference type="HOGENOM" id="CLU_089574_14_0_6"/>
<dbReference type="Proteomes" id="UP000008199">
    <property type="component" value="Chromosome"/>
</dbReference>
<dbReference type="GO" id="GO:0005737">
    <property type="term" value="C:cytoplasm"/>
    <property type="evidence" value="ECO:0007669"/>
    <property type="project" value="UniProtKB-SubCell"/>
</dbReference>
<dbReference type="GO" id="GO:0004792">
    <property type="term" value="F:thiosulfate-cyanide sulfurtransferase activity"/>
    <property type="evidence" value="ECO:0007669"/>
    <property type="project" value="UniProtKB-UniRule"/>
</dbReference>
<dbReference type="GO" id="GO:0006071">
    <property type="term" value="P:glycerol metabolic process"/>
    <property type="evidence" value="ECO:0007669"/>
    <property type="project" value="UniProtKB-UniRule"/>
</dbReference>
<dbReference type="CDD" id="cd01444">
    <property type="entry name" value="GlpE_ST"/>
    <property type="match status" value="1"/>
</dbReference>
<dbReference type="FunFam" id="3.40.250.10:FF:000007">
    <property type="entry name" value="Thiosulfate sulfurtransferase GlpE"/>
    <property type="match status" value="1"/>
</dbReference>
<dbReference type="Gene3D" id="3.40.250.10">
    <property type="entry name" value="Rhodanese-like domain"/>
    <property type="match status" value="1"/>
</dbReference>
<dbReference type="HAMAP" id="MF_01009">
    <property type="entry name" value="Thiosulf_sulfurtr"/>
    <property type="match status" value="1"/>
</dbReference>
<dbReference type="InterPro" id="IPR050229">
    <property type="entry name" value="GlpE_sulfurtransferase"/>
</dbReference>
<dbReference type="InterPro" id="IPR001763">
    <property type="entry name" value="Rhodanese-like_dom"/>
</dbReference>
<dbReference type="InterPro" id="IPR036873">
    <property type="entry name" value="Rhodanese-like_dom_sf"/>
</dbReference>
<dbReference type="InterPro" id="IPR023695">
    <property type="entry name" value="Thiosulf_sulfurTrfase"/>
</dbReference>
<dbReference type="NCBIfam" id="NF001195">
    <property type="entry name" value="PRK00162.1"/>
    <property type="match status" value="1"/>
</dbReference>
<dbReference type="PANTHER" id="PTHR43031">
    <property type="entry name" value="FAD-DEPENDENT OXIDOREDUCTASE"/>
    <property type="match status" value="1"/>
</dbReference>
<dbReference type="PANTHER" id="PTHR43031:SF6">
    <property type="entry name" value="THIOSULFATE SULFURTRANSFERASE GLPE"/>
    <property type="match status" value="1"/>
</dbReference>
<dbReference type="Pfam" id="PF00581">
    <property type="entry name" value="Rhodanese"/>
    <property type="match status" value="1"/>
</dbReference>
<dbReference type="SMART" id="SM00450">
    <property type="entry name" value="RHOD"/>
    <property type="match status" value="1"/>
</dbReference>
<dbReference type="SUPFAM" id="SSF52821">
    <property type="entry name" value="Rhodanese/Cell cycle control phosphatase"/>
    <property type="match status" value="1"/>
</dbReference>
<dbReference type="PROSITE" id="PS50206">
    <property type="entry name" value="RHODANESE_3"/>
    <property type="match status" value="1"/>
</dbReference>
<feature type="chain" id="PRO_1000190097" description="Thiosulfate sulfurtransferase GlpE">
    <location>
        <begin position="1"/>
        <end position="108"/>
    </location>
</feature>
<feature type="domain" description="Rhodanese" evidence="1">
    <location>
        <begin position="17"/>
        <end position="105"/>
    </location>
</feature>
<feature type="active site" description="Cysteine persulfide intermediate" evidence="1">
    <location>
        <position position="65"/>
    </location>
</feature>
<reference key="1">
    <citation type="journal article" date="2008" name="DNA Res.">
        <title>Complete genome sequence and comparative analysis of the wild-type commensal Escherichia coli strain SE11 isolated from a healthy adult.</title>
        <authorList>
            <person name="Oshima K."/>
            <person name="Toh H."/>
            <person name="Ogura Y."/>
            <person name="Sasamoto H."/>
            <person name="Morita H."/>
            <person name="Park S.-H."/>
            <person name="Ooka T."/>
            <person name="Iyoda S."/>
            <person name="Taylor T.D."/>
            <person name="Hayashi T."/>
            <person name="Itoh K."/>
            <person name="Hattori M."/>
        </authorList>
    </citation>
    <scope>NUCLEOTIDE SEQUENCE [LARGE SCALE GENOMIC DNA]</scope>
    <source>
        <strain>SE11</strain>
    </source>
</reference>
<name>GLPE_ECOSE</name>
<keyword id="KW-0963">Cytoplasm</keyword>
<keyword id="KW-0808">Transferase</keyword>
<organism>
    <name type="scientific">Escherichia coli (strain SE11)</name>
    <dbReference type="NCBI Taxonomy" id="409438"/>
    <lineage>
        <taxon>Bacteria</taxon>
        <taxon>Pseudomonadati</taxon>
        <taxon>Pseudomonadota</taxon>
        <taxon>Gammaproteobacteria</taxon>
        <taxon>Enterobacterales</taxon>
        <taxon>Enterobacteriaceae</taxon>
        <taxon>Escherichia</taxon>
    </lineage>
</organism>
<comment type="function">
    <text evidence="1">Transferase that catalyzes the transfer of sulfur from thiosulfate to thiophilic acceptors such as cyanide or dithiols. May function in a CysM-independent thiosulfate assimilation pathway by catalyzing the conversion of thiosulfate to sulfite, which can then be used for L-cysteine biosynthesis.</text>
</comment>
<comment type="catalytic activity">
    <reaction evidence="1">
        <text>thiosulfate + hydrogen cyanide = thiocyanate + sulfite + 2 H(+)</text>
        <dbReference type="Rhea" id="RHEA:16881"/>
        <dbReference type="ChEBI" id="CHEBI:15378"/>
        <dbReference type="ChEBI" id="CHEBI:17359"/>
        <dbReference type="ChEBI" id="CHEBI:18022"/>
        <dbReference type="ChEBI" id="CHEBI:18407"/>
        <dbReference type="ChEBI" id="CHEBI:33542"/>
        <dbReference type="EC" id="2.8.1.1"/>
    </reaction>
</comment>
<comment type="catalytic activity">
    <reaction evidence="1">
        <text>thiosulfate + [thioredoxin]-dithiol = [thioredoxin]-disulfide + hydrogen sulfide + sulfite + 2 H(+)</text>
        <dbReference type="Rhea" id="RHEA:83859"/>
        <dbReference type="Rhea" id="RHEA-COMP:10698"/>
        <dbReference type="Rhea" id="RHEA-COMP:10700"/>
        <dbReference type="ChEBI" id="CHEBI:15378"/>
        <dbReference type="ChEBI" id="CHEBI:17359"/>
        <dbReference type="ChEBI" id="CHEBI:29919"/>
        <dbReference type="ChEBI" id="CHEBI:29950"/>
        <dbReference type="ChEBI" id="CHEBI:33542"/>
        <dbReference type="ChEBI" id="CHEBI:50058"/>
    </reaction>
</comment>
<comment type="subcellular location">
    <subcellularLocation>
        <location evidence="1">Cytoplasm</location>
    </subcellularLocation>
</comment>
<comment type="similarity">
    <text evidence="1">Belongs to the GlpE family.</text>
</comment>